<name>ACP_SHEON</name>
<feature type="chain" id="PRO_0000180184" description="Acyl carrier protein">
    <location>
        <begin position="1"/>
        <end position="77"/>
    </location>
</feature>
<feature type="domain" description="Carrier" evidence="2">
    <location>
        <begin position="2"/>
        <end position="77"/>
    </location>
</feature>
<feature type="modified residue" description="O-(pantetheine 4'-phosphoryl)serine" evidence="2">
    <location>
        <position position="37"/>
    </location>
</feature>
<dbReference type="EMBL" id="AE014299">
    <property type="protein sequence ID" value="AAN55800.1"/>
    <property type="molecule type" value="Genomic_DNA"/>
</dbReference>
<dbReference type="RefSeq" id="NP_718356.1">
    <property type="nucleotide sequence ID" value="NC_004347.2"/>
</dbReference>
<dbReference type="RefSeq" id="WP_006081231.1">
    <property type="nucleotide sequence ID" value="NZ_CP053946.1"/>
</dbReference>
<dbReference type="SMR" id="Q8EDH4"/>
<dbReference type="STRING" id="211586.SO_2775"/>
<dbReference type="PaxDb" id="211586-SO_2775"/>
<dbReference type="GeneID" id="94728503"/>
<dbReference type="KEGG" id="son:SO_2775"/>
<dbReference type="PATRIC" id="fig|211586.12.peg.2675"/>
<dbReference type="eggNOG" id="COG0236">
    <property type="taxonomic scope" value="Bacteria"/>
</dbReference>
<dbReference type="HOGENOM" id="CLU_108696_5_1_6"/>
<dbReference type="OrthoDB" id="9804551at2"/>
<dbReference type="PhylomeDB" id="Q8EDH4"/>
<dbReference type="BioCyc" id="SONE211586:G1GMP-2561-MONOMER"/>
<dbReference type="UniPathway" id="UPA00094"/>
<dbReference type="PRO" id="PR:Q8EDH4"/>
<dbReference type="Proteomes" id="UP000008186">
    <property type="component" value="Chromosome"/>
</dbReference>
<dbReference type="GO" id="GO:0005829">
    <property type="term" value="C:cytosol"/>
    <property type="evidence" value="ECO:0000318"/>
    <property type="project" value="GO_Central"/>
</dbReference>
<dbReference type="GO" id="GO:0016020">
    <property type="term" value="C:membrane"/>
    <property type="evidence" value="ECO:0007669"/>
    <property type="project" value="GOC"/>
</dbReference>
<dbReference type="GO" id="GO:0000035">
    <property type="term" value="F:acyl binding"/>
    <property type="evidence" value="ECO:0000318"/>
    <property type="project" value="GO_Central"/>
</dbReference>
<dbReference type="GO" id="GO:0000036">
    <property type="term" value="F:acyl carrier activity"/>
    <property type="evidence" value="ECO:0000318"/>
    <property type="project" value="GO_Central"/>
</dbReference>
<dbReference type="GO" id="GO:0009245">
    <property type="term" value="P:lipid A biosynthetic process"/>
    <property type="evidence" value="ECO:0000318"/>
    <property type="project" value="GO_Central"/>
</dbReference>
<dbReference type="FunFam" id="1.10.1200.10:FF:000001">
    <property type="entry name" value="Acyl carrier protein"/>
    <property type="match status" value="1"/>
</dbReference>
<dbReference type="Gene3D" id="1.10.1200.10">
    <property type="entry name" value="ACP-like"/>
    <property type="match status" value="1"/>
</dbReference>
<dbReference type="HAMAP" id="MF_01217">
    <property type="entry name" value="Acyl_carrier"/>
    <property type="match status" value="1"/>
</dbReference>
<dbReference type="InterPro" id="IPR003231">
    <property type="entry name" value="ACP"/>
</dbReference>
<dbReference type="InterPro" id="IPR036736">
    <property type="entry name" value="ACP-like_sf"/>
</dbReference>
<dbReference type="InterPro" id="IPR009081">
    <property type="entry name" value="PP-bd_ACP"/>
</dbReference>
<dbReference type="InterPro" id="IPR006162">
    <property type="entry name" value="Ppantetheine_attach_site"/>
</dbReference>
<dbReference type="NCBIfam" id="TIGR00517">
    <property type="entry name" value="acyl_carrier"/>
    <property type="match status" value="1"/>
</dbReference>
<dbReference type="NCBIfam" id="NF002148">
    <property type="entry name" value="PRK00982.1-2"/>
    <property type="match status" value="1"/>
</dbReference>
<dbReference type="NCBIfam" id="NF002149">
    <property type="entry name" value="PRK00982.1-3"/>
    <property type="match status" value="1"/>
</dbReference>
<dbReference type="NCBIfam" id="NF002150">
    <property type="entry name" value="PRK00982.1-4"/>
    <property type="match status" value="1"/>
</dbReference>
<dbReference type="NCBIfam" id="NF002151">
    <property type="entry name" value="PRK00982.1-5"/>
    <property type="match status" value="1"/>
</dbReference>
<dbReference type="PANTHER" id="PTHR20863">
    <property type="entry name" value="ACYL CARRIER PROTEIN"/>
    <property type="match status" value="1"/>
</dbReference>
<dbReference type="PANTHER" id="PTHR20863:SF76">
    <property type="entry name" value="CARRIER DOMAIN-CONTAINING PROTEIN"/>
    <property type="match status" value="1"/>
</dbReference>
<dbReference type="Pfam" id="PF00550">
    <property type="entry name" value="PP-binding"/>
    <property type="match status" value="1"/>
</dbReference>
<dbReference type="SUPFAM" id="SSF47336">
    <property type="entry name" value="ACP-like"/>
    <property type="match status" value="1"/>
</dbReference>
<dbReference type="PROSITE" id="PS50075">
    <property type="entry name" value="CARRIER"/>
    <property type="match status" value="1"/>
</dbReference>
<dbReference type="PROSITE" id="PS00012">
    <property type="entry name" value="PHOSPHOPANTETHEINE"/>
    <property type="match status" value="1"/>
</dbReference>
<evidence type="ECO:0000255" key="1">
    <source>
        <dbReference type="HAMAP-Rule" id="MF_01217"/>
    </source>
</evidence>
<evidence type="ECO:0000255" key="2">
    <source>
        <dbReference type="PROSITE-ProRule" id="PRU00258"/>
    </source>
</evidence>
<proteinExistence type="inferred from homology"/>
<gene>
    <name evidence="1" type="primary">acpP</name>
    <name type="ordered locus">SO_2775</name>
</gene>
<organism>
    <name type="scientific">Shewanella oneidensis (strain ATCC 700550 / JCM 31522 / CIP 106686 / LMG 19005 / NCIMB 14063 / MR-1)</name>
    <dbReference type="NCBI Taxonomy" id="211586"/>
    <lineage>
        <taxon>Bacteria</taxon>
        <taxon>Pseudomonadati</taxon>
        <taxon>Pseudomonadota</taxon>
        <taxon>Gammaproteobacteria</taxon>
        <taxon>Alteromonadales</taxon>
        <taxon>Shewanellaceae</taxon>
        <taxon>Shewanella</taxon>
    </lineage>
</organism>
<accession>Q8EDH4</accession>
<reference key="1">
    <citation type="journal article" date="2002" name="Nat. Biotechnol.">
        <title>Genome sequence of the dissimilatory metal ion-reducing bacterium Shewanella oneidensis.</title>
        <authorList>
            <person name="Heidelberg J.F."/>
            <person name="Paulsen I.T."/>
            <person name="Nelson K.E."/>
            <person name="Gaidos E.J."/>
            <person name="Nelson W.C."/>
            <person name="Read T.D."/>
            <person name="Eisen J.A."/>
            <person name="Seshadri R."/>
            <person name="Ward N.L."/>
            <person name="Methe B.A."/>
            <person name="Clayton R.A."/>
            <person name="Meyer T."/>
            <person name="Tsapin A."/>
            <person name="Scott J."/>
            <person name="Beanan M.J."/>
            <person name="Brinkac L.M."/>
            <person name="Daugherty S.C."/>
            <person name="DeBoy R.T."/>
            <person name="Dodson R.J."/>
            <person name="Durkin A.S."/>
            <person name="Haft D.H."/>
            <person name="Kolonay J.F."/>
            <person name="Madupu R."/>
            <person name="Peterson J.D."/>
            <person name="Umayam L.A."/>
            <person name="White O."/>
            <person name="Wolf A.M."/>
            <person name="Vamathevan J.J."/>
            <person name="Weidman J.F."/>
            <person name="Impraim M."/>
            <person name="Lee K."/>
            <person name="Berry K.J."/>
            <person name="Lee C."/>
            <person name="Mueller J."/>
            <person name="Khouri H.M."/>
            <person name="Gill J."/>
            <person name="Utterback T.R."/>
            <person name="McDonald L.A."/>
            <person name="Feldblyum T.V."/>
            <person name="Smith H.O."/>
            <person name="Venter J.C."/>
            <person name="Nealson K.H."/>
            <person name="Fraser C.M."/>
        </authorList>
    </citation>
    <scope>NUCLEOTIDE SEQUENCE [LARGE SCALE GENOMIC DNA]</scope>
    <source>
        <strain>ATCC 700550 / JCM 31522 / CIP 106686 / LMG 19005 / NCIMB 14063 / MR-1</strain>
    </source>
</reference>
<protein>
    <recommendedName>
        <fullName evidence="1">Acyl carrier protein</fullName>
        <shortName evidence="1">ACP</shortName>
    </recommendedName>
</protein>
<comment type="function">
    <text evidence="1">Carrier of the growing fatty acid chain in fatty acid biosynthesis.</text>
</comment>
<comment type="pathway">
    <text evidence="1">Lipid metabolism; fatty acid biosynthesis.</text>
</comment>
<comment type="subcellular location">
    <subcellularLocation>
        <location evidence="1">Cytoplasm</location>
    </subcellularLocation>
</comment>
<comment type="PTM">
    <text evidence="1">4'-phosphopantetheine is transferred from CoA to a specific serine of apo-ACP by AcpS. This modification is essential for activity because fatty acids are bound in thioester linkage to the sulfhydryl of the prosthetic group.</text>
</comment>
<comment type="similarity">
    <text evidence="1">Belongs to the acyl carrier protein (ACP) family.</text>
</comment>
<sequence>MSNIEERVKKIIVEQLGVKEEDVKPAASFVDDLGADSLDTVELVMALEEEFDTEIPDEEAEKITTVQAAIDYVSKNQ</sequence>
<keyword id="KW-0963">Cytoplasm</keyword>
<keyword id="KW-0275">Fatty acid biosynthesis</keyword>
<keyword id="KW-0276">Fatty acid metabolism</keyword>
<keyword id="KW-0444">Lipid biosynthesis</keyword>
<keyword id="KW-0443">Lipid metabolism</keyword>
<keyword id="KW-0596">Phosphopantetheine</keyword>
<keyword id="KW-0597">Phosphoprotein</keyword>
<keyword id="KW-1185">Reference proteome</keyword>